<evidence type="ECO:0000255" key="1">
    <source>
        <dbReference type="HAMAP-Rule" id="MF_00196"/>
    </source>
</evidence>
<protein>
    <recommendedName>
        <fullName evidence="1">Mannitol-1-phosphate 5-dehydrogenase</fullName>
        <ecNumber evidence="1">1.1.1.17</ecNumber>
    </recommendedName>
</protein>
<feature type="chain" id="PRO_1000124391" description="Mannitol-1-phosphate 5-dehydrogenase">
    <location>
        <begin position="1"/>
        <end position="367"/>
    </location>
</feature>
<feature type="binding site" evidence="1">
    <location>
        <begin position="3"/>
        <end position="14"/>
    </location>
    <ligand>
        <name>NAD(+)</name>
        <dbReference type="ChEBI" id="CHEBI:57540"/>
    </ligand>
</feature>
<accession>B9DM96</accession>
<keyword id="KW-0520">NAD</keyword>
<keyword id="KW-0560">Oxidoreductase</keyword>
<keyword id="KW-1185">Reference proteome</keyword>
<name>MTLD_STACT</name>
<organism>
    <name type="scientific">Staphylococcus carnosus (strain TM300)</name>
    <dbReference type="NCBI Taxonomy" id="396513"/>
    <lineage>
        <taxon>Bacteria</taxon>
        <taxon>Bacillati</taxon>
        <taxon>Bacillota</taxon>
        <taxon>Bacilli</taxon>
        <taxon>Bacillales</taxon>
        <taxon>Staphylococcaceae</taxon>
        <taxon>Staphylococcus</taxon>
    </lineage>
</organism>
<dbReference type="EC" id="1.1.1.17" evidence="1"/>
<dbReference type="EMBL" id="AM295250">
    <property type="protein sequence ID" value="CAL28567.1"/>
    <property type="molecule type" value="Genomic_DNA"/>
</dbReference>
<dbReference type="RefSeq" id="WP_015900907.1">
    <property type="nucleotide sequence ID" value="NC_012121.1"/>
</dbReference>
<dbReference type="SMR" id="B9DM96"/>
<dbReference type="GeneID" id="93794112"/>
<dbReference type="KEGG" id="sca:SCA_1661"/>
<dbReference type="eggNOG" id="COG0246">
    <property type="taxonomic scope" value="Bacteria"/>
</dbReference>
<dbReference type="HOGENOM" id="CLU_036089_2_0_9"/>
<dbReference type="OrthoDB" id="271711at2"/>
<dbReference type="BioCyc" id="SCAR396513:SCA_RS08425-MONOMER"/>
<dbReference type="Proteomes" id="UP000000444">
    <property type="component" value="Chromosome"/>
</dbReference>
<dbReference type="GO" id="GO:0005829">
    <property type="term" value="C:cytosol"/>
    <property type="evidence" value="ECO:0007669"/>
    <property type="project" value="TreeGrafter"/>
</dbReference>
<dbReference type="GO" id="GO:0008926">
    <property type="term" value="F:mannitol-1-phosphate 5-dehydrogenase activity"/>
    <property type="evidence" value="ECO:0007669"/>
    <property type="project" value="UniProtKB-UniRule"/>
</dbReference>
<dbReference type="GO" id="GO:0019592">
    <property type="term" value="P:mannitol catabolic process"/>
    <property type="evidence" value="ECO:0007669"/>
    <property type="project" value="TreeGrafter"/>
</dbReference>
<dbReference type="Gene3D" id="1.10.1040.10">
    <property type="entry name" value="N-(1-d-carboxylethyl)-l-norvaline Dehydrogenase, domain 2"/>
    <property type="match status" value="1"/>
</dbReference>
<dbReference type="Gene3D" id="3.40.50.720">
    <property type="entry name" value="NAD(P)-binding Rossmann-like Domain"/>
    <property type="match status" value="1"/>
</dbReference>
<dbReference type="HAMAP" id="MF_00196">
    <property type="entry name" value="Mannitol_dehydrog"/>
    <property type="match status" value="1"/>
</dbReference>
<dbReference type="InterPro" id="IPR008927">
    <property type="entry name" value="6-PGluconate_DH-like_C_sf"/>
</dbReference>
<dbReference type="InterPro" id="IPR013328">
    <property type="entry name" value="6PGD_dom2"/>
</dbReference>
<dbReference type="InterPro" id="IPR023028">
    <property type="entry name" value="Mannitol_1_phos_5_DH"/>
</dbReference>
<dbReference type="InterPro" id="IPR000669">
    <property type="entry name" value="Mannitol_DH"/>
</dbReference>
<dbReference type="InterPro" id="IPR013118">
    <property type="entry name" value="Mannitol_DH_C"/>
</dbReference>
<dbReference type="InterPro" id="IPR023027">
    <property type="entry name" value="Mannitol_DH_CS"/>
</dbReference>
<dbReference type="InterPro" id="IPR013131">
    <property type="entry name" value="Mannitol_DH_N"/>
</dbReference>
<dbReference type="InterPro" id="IPR036291">
    <property type="entry name" value="NAD(P)-bd_dom_sf"/>
</dbReference>
<dbReference type="NCBIfam" id="NF002645">
    <property type="entry name" value="PRK02318.1-1"/>
    <property type="match status" value="1"/>
</dbReference>
<dbReference type="NCBIfam" id="NF002652">
    <property type="entry name" value="PRK02318.2-5"/>
    <property type="match status" value="1"/>
</dbReference>
<dbReference type="PANTHER" id="PTHR30524:SF0">
    <property type="entry name" value="ALTRONATE OXIDOREDUCTASE-RELATED"/>
    <property type="match status" value="1"/>
</dbReference>
<dbReference type="PANTHER" id="PTHR30524">
    <property type="entry name" value="MANNITOL-1-PHOSPHATE 5-DEHYDROGENASE"/>
    <property type="match status" value="1"/>
</dbReference>
<dbReference type="Pfam" id="PF01232">
    <property type="entry name" value="Mannitol_dh"/>
    <property type="match status" value="1"/>
</dbReference>
<dbReference type="Pfam" id="PF08125">
    <property type="entry name" value="Mannitol_dh_C"/>
    <property type="match status" value="1"/>
</dbReference>
<dbReference type="PRINTS" id="PR00084">
    <property type="entry name" value="MTLDHDRGNASE"/>
</dbReference>
<dbReference type="SUPFAM" id="SSF48179">
    <property type="entry name" value="6-phosphogluconate dehydrogenase C-terminal domain-like"/>
    <property type="match status" value="1"/>
</dbReference>
<dbReference type="SUPFAM" id="SSF51735">
    <property type="entry name" value="NAD(P)-binding Rossmann-fold domains"/>
    <property type="match status" value="1"/>
</dbReference>
<dbReference type="PROSITE" id="PS00974">
    <property type="entry name" value="MANNITOL_DHGENASE"/>
    <property type="match status" value="1"/>
</dbReference>
<reference key="1">
    <citation type="journal article" date="2009" name="Appl. Environ. Microbiol.">
        <title>Genome analysis of the meat starter culture bacterium Staphylococcus carnosus TM300.</title>
        <authorList>
            <person name="Rosenstein R."/>
            <person name="Nerz C."/>
            <person name="Biswas L."/>
            <person name="Resch A."/>
            <person name="Raddatz G."/>
            <person name="Schuster S.C."/>
            <person name="Goetz F."/>
        </authorList>
    </citation>
    <scope>NUCLEOTIDE SEQUENCE [LARGE SCALE GENOMIC DNA]</scope>
    <source>
        <strain>TM300</strain>
    </source>
</reference>
<proteinExistence type="inferred from homology"/>
<gene>
    <name evidence="1" type="primary">mtlD</name>
    <name type="ordered locus">Sca_1661</name>
</gene>
<sequence>MKAVHFGAGNIGRGFIGQILSDNNVEVTFSDVNSAIVDALNHDHQYDVILADEARTTSTIKGVDAINSAQDPEKLHQALLEADIITTAVGVNLLPIIAKSLAPALKEKETPVNVVACENAIMATDTLKEAVLDITGPLPDHIHFANSAVDRIVPQQTHENILDVLVEPFFEWVVEADAWYGPQLEHIKYVDDLRPYIERKLMTVNTGHAYIAYAGQYYGHQTVLDAISDGKVESGLREVLNETSQYIIDEFGFSEQEQADYVEKIIGRFKNPNLSDDLTRVGRGTLRKIGPKDRIIKPLNYLYEHDLAHEGLTHEAAFLLKYQDDKDTETVEKNKYIQEHGIEAFLKEYAQIDSKLAAEIESVYNQL</sequence>
<comment type="catalytic activity">
    <reaction evidence="1">
        <text>D-mannitol 1-phosphate + NAD(+) = beta-D-fructose 6-phosphate + NADH + H(+)</text>
        <dbReference type="Rhea" id="RHEA:19661"/>
        <dbReference type="ChEBI" id="CHEBI:15378"/>
        <dbReference type="ChEBI" id="CHEBI:57540"/>
        <dbReference type="ChEBI" id="CHEBI:57634"/>
        <dbReference type="ChEBI" id="CHEBI:57945"/>
        <dbReference type="ChEBI" id="CHEBI:61381"/>
        <dbReference type="EC" id="1.1.1.17"/>
    </reaction>
</comment>
<comment type="similarity">
    <text evidence="1">Belongs to the mannitol dehydrogenase family.</text>
</comment>